<comment type="function">
    <text evidence="1">Part of the ABC transporter complex CcmAB involved in the biogenesis of c-type cytochromes; once thought to export heme, this seems not to be the case, but its exact role is uncertain. Responsible for energy coupling to the transport system.</text>
</comment>
<comment type="catalytic activity">
    <reaction evidence="1">
        <text>heme b(in) + ATP + H2O = heme b(out) + ADP + phosphate + H(+)</text>
        <dbReference type="Rhea" id="RHEA:19261"/>
        <dbReference type="ChEBI" id="CHEBI:15377"/>
        <dbReference type="ChEBI" id="CHEBI:15378"/>
        <dbReference type="ChEBI" id="CHEBI:30616"/>
        <dbReference type="ChEBI" id="CHEBI:43474"/>
        <dbReference type="ChEBI" id="CHEBI:60344"/>
        <dbReference type="ChEBI" id="CHEBI:456216"/>
        <dbReference type="EC" id="7.6.2.5"/>
    </reaction>
</comment>
<comment type="subunit">
    <text evidence="1">The complex is composed of two ATP-binding proteins (CcmA) and two transmembrane proteins (CcmB).</text>
</comment>
<comment type="subcellular location">
    <subcellularLocation>
        <location evidence="1">Cell inner membrane</location>
        <topology evidence="1">Peripheral membrane protein</topology>
    </subcellularLocation>
</comment>
<comment type="similarity">
    <text evidence="1">Belongs to the ABC transporter superfamily. CcmA exporter (TC 3.A.1.107) family.</text>
</comment>
<organism>
    <name type="scientific">Salmonella typhi</name>
    <dbReference type="NCBI Taxonomy" id="90370"/>
    <lineage>
        <taxon>Bacteria</taxon>
        <taxon>Pseudomonadati</taxon>
        <taxon>Pseudomonadota</taxon>
        <taxon>Gammaproteobacteria</taxon>
        <taxon>Enterobacterales</taxon>
        <taxon>Enterobacteriaceae</taxon>
        <taxon>Salmonella</taxon>
    </lineage>
</organism>
<accession>P61377</accession>
<accession>Q8XG06</accession>
<sequence>MLEARDLYCERDERTLFRGLSFTVEAGEWVQVTGGNGAGKTTLLRLLTGLARPDGGEVYWQGEPLRRVRDSFHRSLLWIGHQPGIKTRLTARENLHFFHPGDGARLPEALAQAGLAGFEDVPVAQLSAGQQRRVALARLWLTRAALWVLDEPFTAIDVNGVARLTRRMAAHTAQGGMVILTTHQPLPGAADTVRRLALTGGGAGL</sequence>
<protein>
    <recommendedName>
        <fullName evidence="1">Cytochrome c biogenesis ATP-binding export protein CcmA</fullName>
        <ecNumber evidence="1">7.6.2.5</ecNumber>
    </recommendedName>
    <alternativeName>
        <fullName evidence="1">Heme exporter protein A</fullName>
    </alternativeName>
</protein>
<evidence type="ECO:0000255" key="1">
    <source>
        <dbReference type="HAMAP-Rule" id="MF_01707"/>
    </source>
</evidence>
<reference key="1">
    <citation type="journal article" date="2001" name="Nature">
        <title>Complete genome sequence of a multiple drug resistant Salmonella enterica serovar Typhi CT18.</title>
        <authorList>
            <person name="Parkhill J."/>
            <person name="Dougan G."/>
            <person name="James K.D."/>
            <person name="Thomson N.R."/>
            <person name="Pickard D."/>
            <person name="Wain J."/>
            <person name="Churcher C.M."/>
            <person name="Mungall K.L."/>
            <person name="Bentley S.D."/>
            <person name="Holden M.T.G."/>
            <person name="Sebaihia M."/>
            <person name="Baker S."/>
            <person name="Basham D."/>
            <person name="Brooks K."/>
            <person name="Chillingworth T."/>
            <person name="Connerton P."/>
            <person name="Cronin A."/>
            <person name="Davis P."/>
            <person name="Davies R.M."/>
            <person name="Dowd L."/>
            <person name="White N."/>
            <person name="Farrar J."/>
            <person name="Feltwell T."/>
            <person name="Hamlin N."/>
            <person name="Haque A."/>
            <person name="Hien T.T."/>
            <person name="Holroyd S."/>
            <person name="Jagels K."/>
            <person name="Krogh A."/>
            <person name="Larsen T.S."/>
            <person name="Leather S."/>
            <person name="Moule S."/>
            <person name="O'Gaora P."/>
            <person name="Parry C."/>
            <person name="Quail M.A."/>
            <person name="Rutherford K.M."/>
            <person name="Simmonds M."/>
            <person name="Skelton J."/>
            <person name="Stevens K."/>
            <person name="Whitehead S."/>
            <person name="Barrell B.G."/>
        </authorList>
    </citation>
    <scope>NUCLEOTIDE SEQUENCE [LARGE SCALE GENOMIC DNA]</scope>
    <source>
        <strain>CT18</strain>
    </source>
</reference>
<reference key="2">
    <citation type="journal article" date="2003" name="J. Bacteriol.">
        <title>Comparative genomics of Salmonella enterica serovar Typhi strains Ty2 and CT18.</title>
        <authorList>
            <person name="Deng W."/>
            <person name="Liou S.-R."/>
            <person name="Plunkett G. III"/>
            <person name="Mayhew G.F."/>
            <person name="Rose D.J."/>
            <person name="Burland V."/>
            <person name="Kodoyianni V."/>
            <person name="Schwartz D.C."/>
            <person name="Blattner F.R."/>
        </authorList>
    </citation>
    <scope>NUCLEOTIDE SEQUENCE [LARGE SCALE GENOMIC DNA]</scope>
    <source>
        <strain>ATCC 700931 / Ty2</strain>
    </source>
</reference>
<feature type="chain" id="PRO_0000092211" description="Cytochrome c biogenesis ATP-binding export protein CcmA">
    <location>
        <begin position="1"/>
        <end position="205"/>
    </location>
</feature>
<feature type="domain" description="ABC transporter" evidence="1">
    <location>
        <begin position="2"/>
        <end position="205"/>
    </location>
</feature>
<feature type="binding site" evidence="1">
    <location>
        <begin position="34"/>
        <end position="41"/>
    </location>
    <ligand>
        <name>ATP</name>
        <dbReference type="ChEBI" id="CHEBI:30616"/>
    </ligand>
</feature>
<gene>
    <name evidence="1" type="primary">ccmA1</name>
    <name type="ordered locus">STY2480</name>
    <name type="ordered locus">t0610</name>
</gene>
<gene>
    <name evidence="1" type="primary">ccmA2</name>
    <name type="ordered locus">STY3959</name>
    <name type="ordered locus">t3699</name>
</gene>
<keyword id="KW-0067">ATP-binding</keyword>
<keyword id="KW-0997">Cell inner membrane</keyword>
<keyword id="KW-1003">Cell membrane</keyword>
<keyword id="KW-0201">Cytochrome c-type biogenesis</keyword>
<keyword id="KW-0472">Membrane</keyword>
<keyword id="KW-0547">Nucleotide-binding</keyword>
<keyword id="KW-1278">Translocase</keyword>
<keyword id="KW-0813">Transport</keyword>
<dbReference type="EC" id="7.6.2.5" evidence="1"/>
<dbReference type="EMBL" id="AL513382">
    <property type="protein sequence ID" value="CAD07486.1"/>
    <property type="molecule type" value="Genomic_DNA"/>
</dbReference>
<dbReference type="EMBL" id="AL513382">
    <property type="protein sequence ID" value="CAD03175.1"/>
    <property type="molecule type" value="Genomic_DNA"/>
</dbReference>
<dbReference type="EMBL" id="AE014613">
    <property type="protein sequence ID" value="AAO68315.1"/>
    <property type="molecule type" value="Genomic_DNA"/>
</dbReference>
<dbReference type="EMBL" id="AE014613">
    <property type="protein sequence ID" value="AAO71194.1"/>
    <property type="molecule type" value="Genomic_DNA"/>
</dbReference>
<dbReference type="RefSeq" id="NP_456799.1">
    <property type="nucleotide sequence ID" value="NC_003198.1"/>
</dbReference>
<dbReference type="RefSeq" id="NP_458120.1">
    <property type="nucleotide sequence ID" value="NC_003198.1"/>
</dbReference>
<dbReference type="SMR" id="P61377"/>
<dbReference type="STRING" id="220341.gene:17586382"/>
<dbReference type="KEGG" id="stt:t0610"/>
<dbReference type="KEGG" id="stt:t3699"/>
<dbReference type="KEGG" id="sty:STY2480"/>
<dbReference type="KEGG" id="sty:STY3959"/>
<dbReference type="PATRIC" id="fig|220341.7.peg.2511"/>
<dbReference type="eggNOG" id="COG4133">
    <property type="taxonomic scope" value="Bacteria"/>
</dbReference>
<dbReference type="HOGENOM" id="CLU_000604_1_2_6"/>
<dbReference type="OMA" id="NLAWLCA"/>
<dbReference type="OrthoDB" id="9800654at2"/>
<dbReference type="Proteomes" id="UP000000541">
    <property type="component" value="Chromosome"/>
</dbReference>
<dbReference type="Proteomes" id="UP000002670">
    <property type="component" value="Chromosome"/>
</dbReference>
<dbReference type="GO" id="GO:0005886">
    <property type="term" value="C:plasma membrane"/>
    <property type="evidence" value="ECO:0007669"/>
    <property type="project" value="UniProtKB-SubCell"/>
</dbReference>
<dbReference type="GO" id="GO:0015439">
    <property type="term" value="F:ABC-type heme transporter activity"/>
    <property type="evidence" value="ECO:0007669"/>
    <property type="project" value="UniProtKB-EC"/>
</dbReference>
<dbReference type="GO" id="GO:0005524">
    <property type="term" value="F:ATP binding"/>
    <property type="evidence" value="ECO:0007669"/>
    <property type="project" value="UniProtKB-KW"/>
</dbReference>
<dbReference type="GO" id="GO:0016887">
    <property type="term" value="F:ATP hydrolysis activity"/>
    <property type="evidence" value="ECO:0007669"/>
    <property type="project" value="InterPro"/>
</dbReference>
<dbReference type="GO" id="GO:0017004">
    <property type="term" value="P:cytochrome complex assembly"/>
    <property type="evidence" value="ECO:0007669"/>
    <property type="project" value="UniProtKB-KW"/>
</dbReference>
<dbReference type="CDD" id="cd03231">
    <property type="entry name" value="ABC_CcmA_heme_exporter"/>
    <property type="match status" value="1"/>
</dbReference>
<dbReference type="Gene3D" id="3.40.50.300">
    <property type="entry name" value="P-loop containing nucleotide triphosphate hydrolases"/>
    <property type="match status" value="1"/>
</dbReference>
<dbReference type="InterPro" id="IPR003593">
    <property type="entry name" value="AAA+_ATPase"/>
</dbReference>
<dbReference type="InterPro" id="IPR003439">
    <property type="entry name" value="ABC_transporter-like_ATP-bd"/>
</dbReference>
<dbReference type="InterPro" id="IPR017871">
    <property type="entry name" value="ABC_transporter-like_CS"/>
</dbReference>
<dbReference type="InterPro" id="IPR005895">
    <property type="entry name" value="ABC_transptr_haem_export_CcmA"/>
</dbReference>
<dbReference type="InterPro" id="IPR027417">
    <property type="entry name" value="P-loop_NTPase"/>
</dbReference>
<dbReference type="NCBIfam" id="TIGR01189">
    <property type="entry name" value="ccmA"/>
    <property type="match status" value="1"/>
</dbReference>
<dbReference type="NCBIfam" id="NF010061">
    <property type="entry name" value="PRK13538.1"/>
    <property type="match status" value="1"/>
</dbReference>
<dbReference type="PANTHER" id="PTHR43499">
    <property type="entry name" value="ABC TRANSPORTER I FAMILY MEMBER 1"/>
    <property type="match status" value="1"/>
</dbReference>
<dbReference type="PANTHER" id="PTHR43499:SF1">
    <property type="entry name" value="ABC TRANSPORTER I FAMILY MEMBER 1"/>
    <property type="match status" value="1"/>
</dbReference>
<dbReference type="Pfam" id="PF00005">
    <property type="entry name" value="ABC_tran"/>
    <property type="match status" value="1"/>
</dbReference>
<dbReference type="SMART" id="SM00382">
    <property type="entry name" value="AAA"/>
    <property type="match status" value="1"/>
</dbReference>
<dbReference type="SUPFAM" id="SSF52540">
    <property type="entry name" value="P-loop containing nucleoside triphosphate hydrolases"/>
    <property type="match status" value="1"/>
</dbReference>
<dbReference type="PROSITE" id="PS00211">
    <property type="entry name" value="ABC_TRANSPORTER_1"/>
    <property type="match status" value="1"/>
</dbReference>
<dbReference type="PROSITE" id="PS50893">
    <property type="entry name" value="ABC_TRANSPORTER_2"/>
    <property type="match status" value="1"/>
</dbReference>
<dbReference type="PROSITE" id="PS51243">
    <property type="entry name" value="CCMA"/>
    <property type="match status" value="1"/>
</dbReference>
<proteinExistence type="inferred from homology"/>
<name>CCMA_SALTI</name>